<reference key="1">
    <citation type="journal article" date="2006" name="Proc. Natl. Acad. Sci. U.S.A.">
        <title>Multireplicon genome architecture of Lactobacillus salivarius.</title>
        <authorList>
            <person name="Claesson M.J."/>
            <person name="Li Y."/>
            <person name="Leahy S."/>
            <person name="Canchaya C."/>
            <person name="van Pijkeren J.P."/>
            <person name="Cerdeno-Tarraga A.M."/>
            <person name="Parkhill J."/>
            <person name="Flynn S."/>
            <person name="O'Sullivan G.C."/>
            <person name="Collins J.K."/>
            <person name="Higgins D."/>
            <person name="Shanahan F."/>
            <person name="Fitzgerald G.F."/>
            <person name="van Sinderen D."/>
            <person name="O'Toole P.W."/>
        </authorList>
    </citation>
    <scope>NUCLEOTIDE SEQUENCE [LARGE SCALE GENOMIC DNA]</scope>
    <source>
        <strain>UCC118</strain>
    </source>
</reference>
<accession>Q1WTL2</accession>
<feature type="chain" id="PRO_0000388899" description="UPF0756 membrane protein LSL_0936">
    <location>
        <begin position="1"/>
        <end position="153"/>
    </location>
</feature>
<feature type="transmembrane region" description="Helical" evidence="1">
    <location>
        <begin position="4"/>
        <end position="24"/>
    </location>
</feature>
<feature type="transmembrane region" description="Helical" evidence="1">
    <location>
        <begin position="26"/>
        <end position="46"/>
    </location>
</feature>
<feature type="transmembrane region" description="Helical" evidence="1">
    <location>
        <begin position="51"/>
        <end position="71"/>
    </location>
</feature>
<feature type="transmembrane region" description="Helical" evidence="1">
    <location>
        <begin position="86"/>
        <end position="106"/>
    </location>
</feature>
<feature type="transmembrane region" description="Helical" evidence="1">
    <location>
        <begin position="116"/>
        <end position="136"/>
    </location>
</feature>
<keyword id="KW-1003">Cell membrane</keyword>
<keyword id="KW-0472">Membrane</keyword>
<keyword id="KW-1185">Reference proteome</keyword>
<keyword id="KW-0812">Transmembrane</keyword>
<keyword id="KW-1133">Transmembrane helix</keyword>
<name>Y936_LIGS1</name>
<proteinExistence type="inferred from homology"/>
<dbReference type="EMBL" id="CP000233">
    <property type="protein sequence ID" value="ABD99746.1"/>
    <property type="molecule type" value="Genomic_DNA"/>
</dbReference>
<dbReference type="RefSeq" id="WP_011476058.1">
    <property type="nucleotide sequence ID" value="NC_007929.1"/>
</dbReference>
<dbReference type="RefSeq" id="YP_535829.1">
    <property type="nucleotide sequence ID" value="NC_007929.1"/>
</dbReference>
<dbReference type="STRING" id="362948.LSL_0936"/>
<dbReference type="KEGG" id="lsl:LSL_0936"/>
<dbReference type="PATRIC" id="fig|362948.14.peg.1011"/>
<dbReference type="HOGENOM" id="CLU_125889_1_0_9"/>
<dbReference type="OrthoDB" id="80306at2"/>
<dbReference type="Proteomes" id="UP000006559">
    <property type="component" value="Chromosome"/>
</dbReference>
<dbReference type="GO" id="GO:0005886">
    <property type="term" value="C:plasma membrane"/>
    <property type="evidence" value="ECO:0007669"/>
    <property type="project" value="UniProtKB-SubCell"/>
</dbReference>
<dbReference type="HAMAP" id="MF_01874">
    <property type="entry name" value="UPF0756"/>
    <property type="match status" value="1"/>
</dbReference>
<dbReference type="InterPro" id="IPR007382">
    <property type="entry name" value="UPF0756_TM"/>
</dbReference>
<dbReference type="PANTHER" id="PTHR38452">
    <property type="entry name" value="UPF0756 MEMBRANE PROTEIN YEAL"/>
    <property type="match status" value="1"/>
</dbReference>
<dbReference type="PANTHER" id="PTHR38452:SF1">
    <property type="entry name" value="UPF0756 MEMBRANE PROTEIN YEAL"/>
    <property type="match status" value="1"/>
</dbReference>
<dbReference type="Pfam" id="PF04284">
    <property type="entry name" value="DUF441"/>
    <property type="match status" value="1"/>
</dbReference>
<sequence>MESWIFLGLILLIAYLGKNSSLLIAGAVVIVIKLFPFLSQKLYPVIQAKGINWGVTIISVAILIPIATGQIQFKDLINAMKTPAGWIAVVCGILVAILSKHGVNLLSSTPQVTVALVIGTIIGVVFLKGVAAGPVIAAGITYYLVTLLNLSFS</sequence>
<evidence type="ECO:0000255" key="1">
    <source>
        <dbReference type="HAMAP-Rule" id="MF_01874"/>
    </source>
</evidence>
<comment type="subcellular location">
    <subcellularLocation>
        <location evidence="1">Cell membrane</location>
        <topology evidence="1">Multi-pass membrane protein</topology>
    </subcellularLocation>
</comment>
<comment type="similarity">
    <text evidence="1">Belongs to the UPF0756 family.</text>
</comment>
<organism>
    <name type="scientific">Ligilactobacillus salivarius (strain UCC118)</name>
    <name type="common">Lactobacillus salivarius</name>
    <dbReference type="NCBI Taxonomy" id="362948"/>
    <lineage>
        <taxon>Bacteria</taxon>
        <taxon>Bacillati</taxon>
        <taxon>Bacillota</taxon>
        <taxon>Bacilli</taxon>
        <taxon>Lactobacillales</taxon>
        <taxon>Lactobacillaceae</taxon>
        <taxon>Ligilactobacillus</taxon>
    </lineage>
</organism>
<gene>
    <name type="ordered locus">LSL_0936</name>
</gene>
<protein>
    <recommendedName>
        <fullName evidence="1">UPF0756 membrane protein LSL_0936</fullName>
    </recommendedName>
</protein>